<organism>
    <name type="scientific">Cereibacter sphaeroides (strain ATCC 17023 / DSM 158 / JCM 6121 / CCUG 31486 / LMG 2827 / NBRC 12203 / NCIMB 8253 / ATH 2.4.1.)</name>
    <name type="common">Rhodobacter sphaeroides</name>
    <dbReference type="NCBI Taxonomy" id="272943"/>
    <lineage>
        <taxon>Bacteria</taxon>
        <taxon>Pseudomonadati</taxon>
        <taxon>Pseudomonadota</taxon>
        <taxon>Alphaproteobacteria</taxon>
        <taxon>Rhodobacterales</taxon>
        <taxon>Paracoccaceae</taxon>
        <taxon>Cereibacter</taxon>
    </lineage>
</organism>
<comment type="function">
    <text evidence="1">Specifically methylates the uridine in position 2552 of 23S rRNA at the 2'-O position of the ribose in the fully assembled 50S ribosomal subunit.</text>
</comment>
<comment type="catalytic activity">
    <reaction evidence="1">
        <text>uridine(2552) in 23S rRNA + S-adenosyl-L-methionine = 2'-O-methyluridine(2552) in 23S rRNA + S-adenosyl-L-homocysteine + H(+)</text>
        <dbReference type="Rhea" id="RHEA:42720"/>
        <dbReference type="Rhea" id="RHEA-COMP:10202"/>
        <dbReference type="Rhea" id="RHEA-COMP:10203"/>
        <dbReference type="ChEBI" id="CHEBI:15378"/>
        <dbReference type="ChEBI" id="CHEBI:57856"/>
        <dbReference type="ChEBI" id="CHEBI:59789"/>
        <dbReference type="ChEBI" id="CHEBI:65315"/>
        <dbReference type="ChEBI" id="CHEBI:74478"/>
        <dbReference type="EC" id="2.1.1.166"/>
    </reaction>
</comment>
<comment type="subcellular location">
    <subcellularLocation>
        <location evidence="1">Cytoplasm</location>
    </subcellularLocation>
</comment>
<comment type="similarity">
    <text evidence="1">Belongs to the class I-like SAM-binding methyltransferase superfamily. RNA methyltransferase RlmE family.</text>
</comment>
<dbReference type="EC" id="2.1.1.166" evidence="1"/>
<dbReference type="EMBL" id="CP000143">
    <property type="protein sequence ID" value="ABA78929.1"/>
    <property type="molecule type" value="Genomic_DNA"/>
</dbReference>
<dbReference type="RefSeq" id="WP_011337734.1">
    <property type="nucleotide sequence ID" value="NC_007493.2"/>
</dbReference>
<dbReference type="RefSeq" id="YP_352830.1">
    <property type="nucleotide sequence ID" value="NC_007493.2"/>
</dbReference>
<dbReference type="SMR" id="Q3J2Q5"/>
<dbReference type="STRING" id="272943.RSP_2772"/>
<dbReference type="EnsemblBacteria" id="ABA78929">
    <property type="protein sequence ID" value="ABA78929"/>
    <property type="gene ID" value="RSP_2772"/>
</dbReference>
<dbReference type="GeneID" id="3720505"/>
<dbReference type="KEGG" id="rsp:RSP_2772"/>
<dbReference type="PATRIC" id="fig|272943.9.peg.1696"/>
<dbReference type="eggNOG" id="COG0293">
    <property type="taxonomic scope" value="Bacteria"/>
</dbReference>
<dbReference type="OrthoDB" id="9790080at2"/>
<dbReference type="PhylomeDB" id="Q3J2Q5"/>
<dbReference type="Proteomes" id="UP000002703">
    <property type="component" value="Chromosome 1"/>
</dbReference>
<dbReference type="GO" id="GO:0005737">
    <property type="term" value="C:cytoplasm"/>
    <property type="evidence" value="ECO:0007669"/>
    <property type="project" value="UniProtKB-SubCell"/>
</dbReference>
<dbReference type="GO" id="GO:0008650">
    <property type="term" value="F:rRNA (uridine-2'-O-)-methyltransferase activity"/>
    <property type="evidence" value="ECO:0007669"/>
    <property type="project" value="UniProtKB-UniRule"/>
</dbReference>
<dbReference type="Gene3D" id="3.40.50.150">
    <property type="entry name" value="Vaccinia Virus protein VP39"/>
    <property type="match status" value="1"/>
</dbReference>
<dbReference type="HAMAP" id="MF_01547">
    <property type="entry name" value="RNA_methyltr_E"/>
    <property type="match status" value="1"/>
</dbReference>
<dbReference type="InterPro" id="IPR050082">
    <property type="entry name" value="RNA_methyltr_RlmE"/>
</dbReference>
<dbReference type="InterPro" id="IPR002877">
    <property type="entry name" value="RNA_MeTrfase_FtsJ_dom"/>
</dbReference>
<dbReference type="InterPro" id="IPR015507">
    <property type="entry name" value="rRNA-MeTfrase_E"/>
</dbReference>
<dbReference type="InterPro" id="IPR029063">
    <property type="entry name" value="SAM-dependent_MTases_sf"/>
</dbReference>
<dbReference type="PANTHER" id="PTHR10920">
    <property type="entry name" value="RIBOSOMAL RNA METHYLTRANSFERASE"/>
    <property type="match status" value="1"/>
</dbReference>
<dbReference type="PANTHER" id="PTHR10920:SF18">
    <property type="entry name" value="RRNA METHYLTRANSFERASE 2, MITOCHONDRIAL"/>
    <property type="match status" value="1"/>
</dbReference>
<dbReference type="Pfam" id="PF01728">
    <property type="entry name" value="FtsJ"/>
    <property type="match status" value="1"/>
</dbReference>
<dbReference type="PIRSF" id="PIRSF005461">
    <property type="entry name" value="23S_rRNA_mtase"/>
    <property type="match status" value="1"/>
</dbReference>
<dbReference type="SUPFAM" id="SSF53335">
    <property type="entry name" value="S-adenosyl-L-methionine-dependent methyltransferases"/>
    <property type="match status" value="1"/>
</dbReference>
<name>RLME_CERS4</name>
<gene>
    <name evidence="1" type="primary">rlmE</name>
    <name evidence="1" type="synonym">ftsJ</name>
    <name evidence="1" type="synonym">rrmJ</name>
    <name type="ordered locus">RHOS4_13610</name>
    <name type="ORF">RSP_2772</name>
</gene>
<sequence>MTTKNTSGRGQRELRVRVKTAKGRKLSSTLWLERQLNDPYVIRAKKEGYRGRAAYKILELDDKFGFLKPGGRVVDLGCAPGGWCQVAVERVNALGQKKNKPEGTVLGVDLQEVEPISGAEIHQLDFLSDDADEKVKGWLGGRADVVMSDMAAAASGHKGTDHLRIIALCEAAAAFAFDVLEEGGTFVAKVLAGGAENELQALLKKNFTKVANVKPPASRADSSEKFVVAMGFRGRASEPEEGEA</sequence>
<proteinExistence type="inferred from homology"/>
<keyword id="KW-0963">Cytoplasm</keyword>
<keyword id="KW-0489">Methyltransferase</keyword>
<keyword id="KW-1185">Reference proteome</keyword>
<keyword id="KW-0698">rRNA processing</keyword>
<keyword id="KW-0949">S-adenosyl-L-methionine</keyword>
<keyword id="KW-0808">Transferase</keyword>
<evidence type="ECO:0000255" key="1">
    <source>
        <dbReference type="HAMAP-Rule" id="MF_01547"/>
    </source>
</evidence>
<feature type="chain" id="PRO_0000282784" description="Ribosomal RNA large subunit methyltransferase E">
    <location>
        <begin position="1"/>
        <end position="244"/>
    </location>
</feature>
<feature type="active site" description="Proton acceptor" evidence="1">
    <location>
        <position position="189"/>
    </location>
</feature>
<feature type="binding site" evidence="1">
    <location>
        <position position="81"/>
    </location>
    <ligand>
        <name>S-adenosyl-L-methionine</name>
        <dbReference type="ChEBI" id="CHEBI:59789"/>
    </ligand>
</feature>
<feature type="binding site" evidence="1">
    <location>
        <position position="83"/>
    </location>
    <ligand>
        <name>S-adenosyl-L-methionine</name>
        <dbReference type="ChEBI" id="CHEBI:59789"/>
    </ligand>
</feature>
<feature type="binding site" evidence="1">
    <location>
        <position position="109"/>
    </location>
    <ligand>
        <name>S-adenosyl-L-methionine</name>
        <dbReference type="ChEBI" id="CHEBI:59789"/>
    </ligand>
</feature>
<feature type="binding site" evidence="1">
    <location>
        <position position="125"/>
    </location>
    <ligand>
        <name>S-adenosyl-L-methionine</name>
        <dbReference type="ChEBI" id="CHEBI:59789"/>
    </ligand>
</feature>
<feature type="binding site" evidence="1">
    <location>
        <position position="149"/>
    </location>
    <ligand>
        <name>S-adenosyl-L-methionine</name>
        <dbReference type="ChEBI" id="CHEBI:59789"/>
    </ligand>
</feature>
<reference key="1">
    <citation type="submission" date="2005-09" db="EMBL/GenBank/DDBJ databases">
        <title>Complete sequence of chromosome 1 of Rhodobacter sphaeroides 2.4.1.</title>
        <authorList>
            <person name="Copeland A."/>
            <person name="Lucas S."/>
            <person name="Lapidus A."/>
            <person name="Barry K."/>
            <person name="Detter J.C."/>
            <person name="Glavina T."/>
            <person name="Hammon N."/>
            <person name="Israni S."/>
            <person name="Pitluck S."/>
            <person name="Richardson P."/>
            <person name="Mackenzie C."/>
            <person name="Choudhary M."/>
            <person name="Larimer F."/>
            <person name="Hauser L.J."/>
            <person name="Land M."/>
            <person name="Donohue T.J."/>
            <person name="Kaplan S."/>
        </authorList>
    </citation>
    <scope>NUCLEOTIDE SEQUENCE [LARGE SCALE GENOMIC DNA]</scope>
    <source>
        <strain>ATCC 17023 / DSM 158 / JCM 6121 / CCUG 31486 / LMG 2827 / NBRC 12203 / NCIMB 8253 / ATH 2.4.1.</strain>
    </source>
</reference>
<protein>
    <recommendedName>
        <fullName evidence="1">Ribosomal RNA large subunit methyltransferase E</fullName>
        <ecNumber evidence="1">2.1.1.166</ecNumber>
    </recommendedName>
    <alternativeName>
        <fullName evidence="1">23S rRNA Um2552 methyltransferase</fullName>
    </alternativeName>
    <alternativeName>
        <fullName evidence="1">rRNA (uridine-2'-O-)-methyltransferase</fullName>
    </alternativeName>
</protein>
<accession>Q3J2Q5</accession>